<feature type="chain" id="PRO_0000367185" description="UPF0173 metal-dependent hydrolase Haur_4333">
    <location>
        <begin position="1"/>
        <end position="241"/>
    </location>
</feature>
<accession>A9AY83</accession>
<reference key="1">
    <citation type="journal article" date="2011" name="Stand. Genomic Sci.">
        <title>Complete genome sequence of the filamentous gliding predatory bacterium Herpetosiphon aurantiacus type strain (114-95(T)).</title>
        <authorList>
            <person name="Kiss H."/>
            <person name="Nett M."/>
            <person name="Domin N."/>
            <person name="Martin K."/>
            <person name="Maresca J.A."/>
            <person name="Copeland A."/>
            <person name="Lapidus A."/>
            <person name="Lucas S."/>
            <person name="Berry K.W."/>
            <person name="Glavina Del Rio T."/>
            <person name="Dalin E."/>
            <person name="Tice H."/>
            <person name="Pitluck S."/>
            <person name="Richardson P."/>
            <person name="Bruce D."/>
            <person name="Goodwin L."/>
            <person name="Han C."/>
            <person name="Detter J.C."/>
            <person name="Schmutz J."/>
            <person name="Brettin T."/>
            <person name="Land M."/>
            <person name="Hauser L."/>
            <person name="Kyrpides N.C."/>
            <person name="Ivanova N."/>
            <person name="Goeker M."/>
            <person name="Woyke T."/>
            <person name="Klenk H.P."/>
            <person name="Bryant D.A."/>
        </authorList>
    </citation>
    <scope>NUCLEOTIDE SEQUENCE [LARGE SCALE GENOMIC DNA]</scope>
    <source>
        <strain>ATCC 23779 / DSM 785 / 114-95</strain>
    </source>
</reference>
<gene>
    <name type="ordered locus">Haur_4333</name>
</gene>
<sequence>MANTTITWLGHASFLFVTPEGKRIVLDPWYEGNPSFPESAKAELEHVDAILLTHGHMDHTGNAITLAQQTKAPVAGIVELIGWVQGQGVDATQCIGFNKGGCIELAGIKATLTTAHHSSSISSGSISLYLGDPCGFILEFSDGCVVYHTGDTCVHGDMALMGEIYQPNVTILPIGDFYTMGPRQAAHALKLIGSKFAIPEHYGTFPALHGNPEALQSELNKLQLNTAIVALQPGEAWTYPA</sequence>
<comment type="similarity">
    <text evidence="1">Belongs to the UPF0173 family.</text>
</comment>
<protein>
    <recommendedName>
        <fullName evidence="1">UPF0173 metal-dependent hydrolase Haur_4333</fullName>
    </recommendedName>
</protein>
<name>Y4333_HERA2</name>
<proteinExistence type="inferred from homology"/>
<evidence type="ECO:0000255" key="1">
    <source>
        <dbReference type="HAMAP-Rule" id="MF_00457"/>
    </source>
</evidence>
<organism>
    <name type="scientific">Herpetosiphon aurantiacus (strain ATCC 23779 / DSM 785 / 114-95)</name>
    <dbReference type="NCBI Taxonomy" id="316274"/>
    <lineage>
        <taxon>Bacteria</taxon>
        <taxon>Bacillati</taxon>
        <taxon>Chloroflexota</taxon>
        <taxon>Chloroflexia</taxon>
        <taxon>Herpetosiphonales</taxon>
        <taxon>Herpetosiphonaceae</taxon>
        <taxon>Herpetosiphon</taxon>
    </lineage>
</organism>
<dbReference type="EMBL" id="CP000875">
    <property type="protein sequence ID" value="ABX06965.1"/>
    <property type="molecule type" value="Genomic_DNA"/>
</dbReference>
<dbReference type="SMR" id="A9AY83"/>
<dbReference type="FunCoup" id="A9AY83">
    <property type="interactions" value="30"/>
</dbReference>
<dbReference type="STRING" id="316274.Haur_4333"/>
<dbReference type="KEGG" id="hau:Haur_4333"/>
<dbReference type="eggNOG" id="COG2220">
    <property type="taxonomic scope" value="Bacteria"/>
</dbReference>
<dbReference type="HOGENOM" id="CLU_070010_4_0_0"/>
<dbReference type="InParanoid" id="A9AY83"/>
<dbReference type="BioCyc" id="HAUR316274:GHYA-4386-MONOMER"/>
<dbReference type="Proteomes" id="UP000000787">
    <property type="component" value="Chromosome"/>
</dbReference>
<dbReference type="GO" id="GO:0016787">
    <property type="term" value="F:hydrolase activity"/>
    <property type="evidence" value="ECO:0007669"/>
    <property type="project" value="UniProtKB-UniRule"/>
</dbReference>
<dbReference type="Gene3D" id="3.60.15.10">
    <property type="entry name" value="Ribonuclease Z/Hydroxyacylglutathione hydrolase-like"/>
    <property type="match status" value="1"/>
</dbReference>
<dbReference type="HAMAP" id="MF_00457">
    <property type="entry name" value="UPF0173"/>
    <property type="match status" value="1"/>
</dbReference>
<dbReference type="InterPro" id="IPR001279">
    <property type="entry name" value="Metallo-B-lactamas"/>
</dbReference>
<dbReference type="InterPro" id="IPR036866">
    <property type="entry name" value="RibonucZ/Hydroxyglut_hydro"/>
</dbReference>
<dbReference type="InterPro" id="IPR022877">
    <property type="entry name" value="UPF0173"/>
</dbReference>
<dbReference type="InterPro" id="IPR050114">
    <property type="entry name" value="UPF0173_UPF0282_UlaG_hydrolase"/>
</dbReference>
<dbReference type="NCBIfam" id="NF001911">
    <property type="entry name" value="PRK00685.1"/>
    <property type="match status" value="1"/>
</dbReference>
<dbReference type="PANTHER" id="PTHR43546:SF3">
    <property type="entry name" value="UPF0173 METAL-DEPENDENT HYDROLASE MJ1163"/>
    <property type="match status" value="1"/>
</dbReference>
<dbReference type="PANTHER" id="PTHR43546">
    <property type="entry name" value="UPF0173 METAL-DEPENDENT HYDROLASE MJ1163-RELATED"/>
    <property type="match status" value="1"/>
</dbReference>
<dbReference type="Pfam" id="PF12706">
    <property type="entry name" value="Lactamase_B_2"/>
    <property type="match status" value="1"/>
</dbReference>
<dbReference type="SMART" id="SM00849">
    <property type="entry name" value="Lactamase_B"/>
    <property type="match status" value="1"/>
</dbReference>
<dbReference type="SUPFAM" id="SSF56281">
    <property type="entry name" value="Metallo-hydrolase/oxidoreductase"/>
    <property type="match status" value="1"/>
</dbReference>
<keyword id="KW-0378">Hydrolase</keyword>